<accession>Q08144</accession>
<accession>D6W248</accession>
<accession>E9P933</accession>
<reference key="1">
    <citation type="journal article" date="1997" name="Nature">
        <title>The nucleotide sequence of Saccharomyces cerevisiae chromosome XV.</title>
        <authorList>
            <person name="Dujon B."/>
            <person name="Albermann K."/>
            <person name="Aldea M."/>
            <person name="Alexandraki D."/>
            <person name="Ansorge W."/>
            <person name="Arino J."/>
            <person name="Benes V."/>
            <person name="Bohn C."/>
            <person name="Bolotin-Fukuhara M."/>
            <person name="Bordonne R."/>
            <person name="Boyer J."/>
            <person name="Camasses A."/>
            <person name="Casamayor A."/>
            <person name="Casas C."/>
            <person name="Cheret G."/>
            <person name="Cziepluch C."/>
            <person name="Daignan-Fornier B."/>
            <person name="Dang V.-D."/>
            <person name="de Haan M."/>
            <person name="Delius H."/>
            <person name="Durand P."/>
            <person name="Fairhead C."/>
            <person name="Feldmann H."/>
            <person name="Gaillon L."/>
            <person name="Galisson F."/>
            <person name="Gamo F.-J."/>
            <person name="Gancedo C."/>
            <person name="Goffeau A."/>
            <person name="Goulding S.E."/>
            <person name="Grivell L.A."/>
            <person name="Habbig B."/>
            <person name="Hand N.J."/>
            <person name="Hani J."/>
            <person name="Hattenhorst U."/>
            <person name="Hebling U."/>
            <person name="Hernando Y."/>
            <person name="Herrero E."/>
            <person name="Heumann K."/>
            <person name="Hiesel R."/>
            <person name="Hilger F."/>
            <person name="Hofmann B."/>
            <person name="Hollenberg C.P."/>
            <person name="Hughes B."/>
            <person name="Jauniaux J.-C."/>
            <person name="Kalogeropoulos A."/>
            <person name="Katsoulou C."/>
            <person name="Kordes E."/>
            <person name="Lafuente M.J."/>
            <person name="Landt O."/>
            <person name="Louis E.J."/>
            <person name="Maarse A.C."/>
            <person name="Madania A."/>
            <person name="Mannhaupt G."/>
            <person name="Marck C."/>
            <person name="Martin R.P."/>
            <person name="Mewes H.-W."/>
            <person name="Michaux G."/>
            <person name="Paces V."/>
            <person name="Parle-McDermott A.G."/>
            <person name="Pearson B.M."/>
            <person name="Perrin A."/>
            <person name="Pettersson B."/>
            <person name="Poch O."/>
            <person name="Pohl T.M."/>
            <person name="Poirey R."/>
            <person name="Portetelle D."/>
            <person name="Pujol A."/>
            <person name="Purnelle B."/>
            <person name="Ramezani Rad M."/>
            <person name="Rechmann S."/>
            <person name="Schwager C."/>
            <person name="Schweizer M."/>
            <person name="Sor F."/>
            <person name="Sterky F."/>
            <person name="Tarassov I.A."/>
            <person name="Teodoru C."/>
            <person name="Tettelin H."/>
            <person name="Thierry A."/>
            <person name="Tobiasch E."/>
            <person name="Tzermia M."/>
            <person name="Uhlen M."/>
            <person name="Unseld M."/>
            <person name="Valens M."/>
            <person name="Vandenbol M."/>
            <person name="Vetter I."/>
            <person name="Vlcek C."/>
            <person name="Voet M."/>
            <person name="Volckaert G."/>
            <person name="Voss H."/>
            <person name="Wambutt R."/>
            <person name="Wedler H."/>
            <person name="Wiemann S."/>
            <person name="Winsor B."/>
            <person name="Wolfe K.H."/>
            <person name="Zollner A."/>
            <person name="Zumstein E."/>
            <person name="Kleine K."/>
        </authorList>
    </citation>
    <scope>NUCLEOTIDE SEQUENCE [LARGE SCALE GENOMIC DNA]</scope>
    <source>
        <strain>ATCC 204508 / S288c</strain>
    </source>
</reference>
<reference key="2">
    <citation type="journal article" date="2014" name="G3 (Bethesda)">
        <title>The reference genome sequence of Saccharomyces cerevisiae: Then and now.</title>
        <authorList>
            <person name="Engel S.R."/>
            <person name="Dietrich F.S."/>
            <person name="Fisk D.G."/>
            <person name="Binkley G."/>
            <person name="Balakrishnan R."/>
            <person name="Costanzo M.C."/>
            <person name="Dwight S.S."/>
            <person name="Hitz B.C."/>
            <person name="Karra K."/>
            <person name="Nash R.S."/>
            <person name="Weng S."/>
            <person name="Wong E.D."/>
            <person name="Lloyd P."/>
            <person name="Skrzypek M.S."/>
            <person name="Miyasato S.R."/>
            <person name="Simison M."/>
            <person name="Cherry J.M."/>
        </authorList>
    </citation>
    <scope>GENOME REANNOTATION</scope>
    <source>
        <strain>ATCC 204508 / S288c</strain>
    </source>
</reference>
<reference key="3">
    <citation type="journal article" date="2007" name="Genome Res.">
        <title>Approaching a complete repository of sequence-verified protein-encoding clones for Saccharomyces cerevisiae.</title>
        <authorList>
            <person name="Hu Y."/>
            <person name="Rolfs A."/>
            <person name="Bhullar B."/>
            <person name="Murthy T.V.S."/>
            <person name="Zhu C."/>
            <person name="Berger M.F."/>
            <person name="Camargo A.A."/>
            <person name="Kelley F."/>
            <person name="McCarron S."/>
            <person name="Jepson D."/>
            <person name="Richardson A."/>
            <person name="Raphael J."/>
            <person name="Moreira D."/>
            <person name="Taycher E."/>
            <person name="Zuo D."/>
            <person name="Mohr S."/>
            <person name="Kane M.F."/>
            <person name="Williamson J."/>
            <person name="Simpson A.J.G."/>
            <person name="Bulyk M.L."/>
            <person name="Harlow E."/>
            <person name="Marsischky G."/>
            <person name="Kolodner R.D."/>
            <person name="LaBaer J."/>
        </authorList>
    </citation>
    <scope>NUCLEOTIDE SEQUENCE [GENOMIC DNA]</scope>
    <source>
        <strain>ATCC 204508 / S288c</strain>
    </source>
</reference>
<reference key="4">
    <citation type="journal article" date="1998" name="J. Biol. Chem.">
        <title>Tlg2p, a yeast syntaxin homolog that resides on the Golgi and endocytic structures.</title>
        <authorList>
            <person name="Abeliovich H."/>
            <person name="Grote E."/>
            <person name="Novick P."/>
            <person name="Ferro-Novick S."/>
        </authorList>
    </citation>
    <scope>CHARACTERIZATION</scope>
</reference>
<reference key="5">
    <citation type="journal article" date="1998" name="Mol. Biol. Cell">
        <title>A yeast t-SNARE involved in endocytosis.</title>
        <authorList>
            <person name="Seron K."/>
            <person name="Tieaho V."/>
            <person name="Prescianotto-Baschong C."/>
            <person name="Aust T."/>
            <person name="Blondel M.O."/>
            <person name="Guillaud P."/>
            <person name="Devilliers G."/>
            <person name="Rossanese O.W."/>
            <person name="Glick B.S."/>
            <person name="Riezman H."/>
            <person name="Keranen S."/>
            <person name="Haguenauer-Tsapis R."/>
        </authorList>
    </citation>
    <scope>CHARACTERIZATION</scope>
</reference>
<reference key="6">
    <citation type="journal article" date="1998" name="Eur. J. Cell Biol.">
        <title>The Sec1p homologue Vps45p binds to the syntaxin Tlg2p.</title>
        <authorList>
            <person name="Nichols B.J."/>
            <person name="Holthuis J.C."/>
            <person name="Pelham H.R."/>
        </authorList>
    </citation>
    <scope>INTERACTION WITH VPS45</scope>
</reference>
<reference key="7">
    <citation type="journal article" date="2009" name="Science">
        <title>Global analysis of Cdk1 substrate phosphorylation sites provides insights into evolution.</title>
        <authorList>
            <person name="Holt L.J."/>
            <person name="Tuch B.B."/>
            <person name="Villen J."/>
            <person name="Johnson A.D."/>
            <person name="Gygi S.P."/>
            <person name="Morgan D.O."/>
        </authorList>
    </citation>
    <scope>PHOSPHORYLATION [LARGE SCALE ANALYSIS] AT SER-109</scope>
    <scope>IDENTIFICATION BY MASS SPECTROMETRY [LARGE SCALE ANALYSIS]</scope>
</reference>
<protein>
    <recommendedName>
        <fullName>t-SNARE affecting a late Golgi compartment protein 2</fullName>
    </recommendedName>
    <alternativeName>
        <fullName>Syntaxin TLG2</fullName>
    </alternativeName>
</protein>
<organism>
    <name type="scientific">Saccharomyces cerevisiae (strain ATCC 204508 / S288c)</name>
    <name type="common">Baker's yeast</name>
    <dbReference type="NCBI Taxonomy" id="559292"/>
    <lineage>
        <taxon>Eukaryota</taxon>
        <taxon>Fungi</taxon>
        <taxon>Dikarya</taxon>
        <taxon>Ascomycota</taxon>
        <taxon>Saccharomycotina</taxon>
        <taxon>Saccharomycetes</taxon>
        <taxon>Saccharomycetales</taxon>
        <taxon>Saccharomycetaceae</taxon>
        <taxon>Saccharomyces</taxon>
    </lineage>
</organism>
<evidence type="ECO:0000255" key="1"/>
<evidence type="ECO:0000255" key="2">
    <source>
        <dbReference type="PROSITE-ProRule" id="PRU00202"/>
    </source>
</evidence>
<evidence type="ECO:0000256" key="3">
    <source>
        <dbReference type="SAM" id="MobiDB-lite"/>
    </source>
</evidence>
<evidence type="ECO:0000269" key="4">
    <source>
    </source>
</evidence>
<evidence type="ECO:0000305" key="5"/>
<evidence type="ECO:0007744" key="6">
    <source>
    </source>
</evidence>
<proteinExistence type="evidence at protein level"/>
<sequence length="397" mass="45875">MFRDRTNLFLSYRRTFPHNITFSSGKAPLGDDQDIEMGTYPMMNMSHDISARLTDERKNKHENHSDALPPIFIDIAQDVDDYLLEVRRLSEQLAKVYRKNSLPGFEDKSHDEALIEDLSFKVIQMLQKCYAVMKRLKTIYNSQFVDGKQLSREELIILDNLQKIYAEKIQTESNKFRVLQNNYLKFLNKDDLKPIRNKASAENTLLLDDEEEEAAREKREGLDIEDYSKRTLQRQQQLHDTSAEAYLRERDEEITQLARGVLEVSTIFREMQDLVVDQGTIVDRIDYNLENTVVELKSADKELNKATHYQKRTQKCKVILLLTLCVIALFFFVMLKPHGGGSGGRNNGSNKYNNDDNKTVNNSHDDGSNTHINDEESNLPSIVEVTESENDALDDLL</sequence>
<gene>
    <name type="primary">TLG2</name>
    <name type="ordered locus">YOL018C</name>
</gene>
<name>TLG2_YEAST</name>
<dbReference type="EMBL" id="Z74760">
    <property type="protein sequence ID" value="CAA99017.1"/>
    <property type="molecule type" value="Genomic_DNA"/>
</dbReference>
<dbReference type="EMBL" id="AY693218">
    <property type="protein sequence ID" value="AAT93237.1"/>
    <property type="molecule type" value="Genomic_DNA"/>
</dbReference>
<dbReference type="EMBL" id="BK006948">
    <property type="protein sequence ID" value="DAA10764.1"/>
    <property type="molecule type" value="Genomic_DNA"/>
</dbReference>
<dbReference type="PIR" id="S66700">
    <property type="entry name" value="S66700"/>
</dbReference>
<dbReference type="RefSeq" id="NP_014624.1">
    <property type="nucleotide sequence ID" value="NM_001183272.1"/>
</dbReference>
<dbReference type="SMR" id="Q08144"/>
<dbReference type="BioGRID" id="34385">
    <property type="interactions" value="649"/>
</dbReference>
<dbReference type="ComplexPortal" id="CPX-5321">
    <property type="entry name" value="Endosomal SNARE complex TLG2-VTI1-TLG1-SNC2"/>
</dbReference>
<dbReference type="ComplexPortal" id="CPX-5322">
    <property type="entry name" value="Endosomal SNARE complex TLG2-VTI1-TLG1-SNC1"/>
</dbReference>
<dbReference type="DIP" id="DIP-4244N"/>
<dbReference type="FunCoup" id="Q08144">
    <property type="interactions" value="897"/>
</dbReference>
<dbReference type="IntAct" id="Q08144">
    <property type="interactions" value="11"/>
</dbReference>
<dbReference type="MINT" id="Q08144"/>
<dbReference type="STRING" id="4932.YOL018C"/>
<dbReference type="iPTMnet" id="Q08144"/>
<dbReference type="SwissPalm" id="Q08144"/>
<dbReference type="PaxDb" id="4932-YOL018C"/>
<dbReference type="PeptideAtlas" id="Q08144"/>
<dbReference type="EnsemblFungi" id="YOL018C_mRNA">
    <property type="protein sequence ID" value="YOL018C"/>
    <property type="gene ID" value="YOL018C"/>
</dbReference>
<dbReference type="GeneID" id="854142"/>
<dbReference type="KEGG" id="sce:YOL018C"/>
<dbReference type="AGR" id="SGD:S000005378"/>
<dbReference type="SGD" id="S000005378">
    <property type="gene designation" value="TLG2"/>
</dbReference>
<dbReference type="VEuPathDB" id="FungiDB:YOL018C"/>
<dbReference type="eggNOG" id="KOG0809">
    <property type="taxonomic scope" value="Eukaryota"/>
</dbReference>
<dbReference type="GeneTree" id="ENSGT01050000244948"/>
<dbReference type="HOGENOM" id="CLU_038177_0_1_1"/>
<dbReference type="InParanoid" id="Q08144"/>
<dbReference type="OMA" id="NRKMCII"/>
<dbReference type="OrthoDB" id="10251371at2759"/>
<dbReference type="BioCyc" id="YEAST:G3O-33434-MONOMER"/>
<dbReference type="Reactome" id="R-SCE-6811440">
    <property type="pathway name" value="Retrograde transport at the Trans-Golgi-Network"/>
</dbReference>
<dbReference type="BioGRID-ORCS" id="854142">
    <property type="hits" value="2 hits in 10 CRISPR screens"/>
</dbReference>
<dbReference type="PRO" id="PR:Q08144"/>
<dbReference type="Proteomes" id="UP000002311">
    <property type="component" value="Chromosome XV"/>
</dbReference>
<dbReference type="RNAct" id="Q08144">
    <property type="molecule type" value="protein"/>
</dbReference>
<dbReference type="GO" id="GO:0005829">
    <property type="term" value="C:cytosol"/>
    <property type="evidence" value="ECO:0007669"/>
    <property type="project" value="GOC"/>
</dbReference>
<dbReference type="GO" id="GO:0012505">
    <property type="term" value="C:endomembrane system"/>
    <property type="evidence" value="ECO:0000318"/>
    <property type="project" value="GO_Central"/>
</dbReference>
<dbReference type="GO" id="GO:0010008">
    <property type="term" value="C:endosome membrane"/>
    <property type="evidence" value="ECO:0000314"/>
    <property type="project" value="SGD"/>
</dbReference>
<dbReference type="GO" id="GO:0000139">
    <property type="term" value="C:Golgi membrane"/>
    <property type="evidence" value="ECO:0000303"/>
    <property type="project" value="ComplexPortal"/>
</dbReference>
<dbReference type="GO" id="GO:0031201">
    <property type="term" value="C:SNARE complex"/>
    <property type="evidence" value="ECO:0000353"/>
    <property type="project" value="SGD"/>
</dbReference>
<dbReference type="GO" id="GO:0005802">
    <property type="term" value="C:trans-Golgi network"/>
    <property type="evidence" value="ECO:0000314"/>
    <property type="project" value="SGD"/>
</dbReference>
<dbReference type="GO" id="GO:0005484">
    <property type="term" value="F:SNAP receptor activity"/>
    <property type="evidence" value="ECO:0000314"/>
    <property type="project" value="SGD"/>
</dbReference>
<dbReference type="GO" id="GO:0000149">
    <property type="term" value="F:SNARE binding"/>
    <property type="evidence" value="ECO:0000318"/>
    <property type="project" value="GO_Central"/>
</dbReference>
<dbReference type="GO" id="GO:0032258">
    <property type="term" value="P:cytoplasm to vacuole targeting by the Cvt pathway"/>
    <property type="evidence" value="ECO:0000315"/>
    <property type="project" value="SGD"/>
</dbReference>
<dbReference type="GO" id="GO:0006897">
    <property type="term" value="P:endocytosis"/>
    <property type="evidence" value="ECO:0000315"/>
    <property type="project" value="SGD"/>
</dbReference>
<dbReference type="GO" id="GO:0006896">
    <property type="term" value="P:Golgi to vacuole transport"/>
    <property type="evidence" value="ECO:0000316"/>
    <property type="project" value="SGD"/>
</dbReference>
<dbReference type="GO" id="GO:0006673">
    <property type="term" value="P:inositol phosphoceramide metabolic process"/>
    <property type="evidence" value="ECO:0000315"/>
    <property type="project" value="SGD"/>
</dbReference>
<dbReference type="GO" id="GO:0006886">
    <property type="term" value="P:intracellular protein transport"/>
    <property type="evidence" value="ECO:0000318"/>
    <property type="project" value="GO_Central"/>
</dbReference>
<dbReference type="GO" id="GO:0006675">
    <property type="term" value="P:mannosyl-inositol phosphorylceramide metabolic process"/>
    <property type="evidence" value="ECO:0000315"/>
    <property type="project" value="SGD"/>
</dbReference>
<dbReference type="GO" id="GO:0032527">
    <property type="term" value="P:protein exit from endoplasmic reticulum"/>
    <property type="evidence" value="ECO:0000316"/>
    <property type="project" value="SGD"/>
</dbReference>
<dbReference type="GO" id="GO:0009306">
    <property type="term" value="P:protein secretion"/>
    <property type="evidence" value="ECO:0000315"/>
    <property type="project" value="SGD"/>
</dbReference>
<dbReference type="GO" id="GO:0042147">
    <property type="term" value="P:retrograde transport, endosome to Golgi"/>
    <property type="evidence" value="ECO:0000303"/>
    <property type="project" value="ComplexPortal"/>
</dbReference>
<dbReference type="GO" id="GO:0048278">
    <property type="term" value="P:vesicle docking"/>
    <property type="evidence" value="ECO:0000318"/>
    <property type="project" value="GO_Central"/>
</dbReference>
<dbReference type="GO" id="GO:0006906">
    <property type="term" value="P:vesicle fusion"/>
    <property type="evidence" value="ECO:0000314"/>
    <property type="project" value="ComplexPortal"/>
</dbReference>
<dbReference type="GO" id="GO:0048280">
    <property type="term" value="P:vesicle fusion with Golgi apparatus"/>
    <property type="evidence" value="ECO:0000303"/>
    <property type="project" value="ComplexPortal"/>
</dbReference>
<dbReference type="CDD" id="cd15845">
    <property type="entry name" value="SNARE_syntaxin16"/>
    <property type="match status" value="1"/>
</dbReference>
<dbReference type="FunFam" id="1.20.58.70:FF:000030">
    <property type="entry name" value="TLG2p Syntaxin-like t-SNARE"/>
    <property type="match status" value="1"/>
</dbReference>
<dbReference type="Gene3D" id="1.20.58.70">
    <property type="match status" value="1"/>
</dbReference>
<dbReference type="InterPro" id="IPR010989">
    <property type="entry name" value="SNARE"/>
</dbReference>
<dbReference type="InterPro" id="IPR045242">
    <property type="entry name" value="Syntaxin"/>
</dbReference>
<dbReference type="InterPro" id="IPR006012">
    <property type="entry name" value="Syntaxin/epimorphin_CS"/>
</dbReference>
<dbReference type="InterPro" id="IPR000727">
    <property type="entry name" value="T_SNARE_dom"/>
</dbReference>
<dbReference type="PANTHER" id="PTHR19957">
    <property type="entry name" value="SYNTAXIN"/>
    <property type="match status" value="1"/>
</dbReference>
<dbReference type="PANTHER" id="PTHR19957:SF83">
    <property type="entry name" value="SYNTAXIN-16"/>
    <property type="match status" value="1"/>
</dbReference>
<dbReference type="Pfam" id="PF05739">
    <property type="entry name" value="SNARE"/>
    <property type="match status" value="1"/>
</dbReference>
<dbReference type="SMART" id="SM00397">
    <property type="entry name" value="t_SNARE"/>
    <property type="match status" value="1"/>
</dbReference>
<dbReference type="SUPFAM" id="SSF47661">
    <property type="entry name" value="t-snare proteins"/>
    <property type="match status" value="1"/>
</dbReference>
<dbReference type="PROSITE" id="PS00914">
    <property type="entry name" value="SYNTAXIN"/>
    <property type="match status" value="1"/>
</dbReference>
<dbReference type="PROSITE" id="PS50192">
    <property type="entry name" value="T_SNARE"/>
    <property type="match status" value="1"/>
</dbReference>
<comment type="function">
    <text>t-SNARE that functions in transport from the endosome to the late Golgi and on the endocytic pathway.</text>
</comment>
<comment type="subunit">
    <text evidence="4">Interacts with VPS45.</text>
</comment>
<comment type="interaction">
    <interactant intactId="EBI-19302">
        <id>Q08144</id>
    </interactant>
    <interactant intactId="EBI-16558">
        <id>P32602</id>
        <label>SEC17</label>
    </interactant>
    <organismsDiffer>false</organismsDiffer>
    <experiments>2</experiments>
</comment>
<comment type="interaction">
    <interactant intactId="EBI-19302">
        <id>Q08144</id>
    </interactant>
    <interactant intactId="EBI-38705">
        <id>Q03322</id>
        <label>TLG1</label>
    </interactant>
    <organismsDiffer>false</organismsDiffer>
    <experiments>3</experiments>
</comment>
<comment type="interaction">
    <interactant intactId="EBI-19302">
        <id>Q08144</id>
    </interactant>
    <interactant intactId="EBI-20444">
        <id>P38932</id>
        <label>VPS45</label>
    </interactant>
    <organismsDiffer>false</organismsDiffer>
    <experiments>5</experiments>
</comment>
<comment type="interaction">
    <interactant intactId="EBI-19302">
        <id>Q08144</id>
    </interactant>
    <interactant intactId="EBI-20519">
        <id>Q04338</id>
        <label>VTI1</label>
    </interactant>
    <organismsDiffer>false</organismsDiffer>
    <experiments>6</experiments>
</comment>
<comment type="subcellular location">
    <subcellularLocation>
        <location>Golgi apparatus</location>
        <location>trans-Golgi network membrane</location>
        <topology>Single-pass type IV membrane protein</topology>
    </subcellularLocation>
    <subcellularLocation>
        <location>Endosome membrane</location>
        <topology>Single-pass type IV membrane protein</topology>
    </subcellularLocation>
</comment>
<comment type="similarity">
    <text evidence="5">Belongs to the syntaxin family.</text>
</comment>
<keyword id="KW-0175">Coiled coil</keyword>
<keyword id="KW-0967">Endosome</keyword>
<keyword id="KW-0333">Golgi apparatus</keyword>
<keyword id="KW-0472">Membrane</keyword>
<keyword id="KW-0597">Phosphoprotein</keyword>
<keyword id="KW-0653">Protein transport</keyword>
<keyword id="KW-1185">Reference proteome</keyword>
<keyword id="KW-0812">Transmembrane</keyword>
<keyword id="KW-1133">Transmembrane helix</keyword>
<keyword id="KW-0813">Transport</keyword>
<feature type="chain" id="PRO_0000210279" description="t-SNARE affecting a late Golgi compartment protein 2">
    <location>
        <begin position="1"/>
        <end position="397"/>
    </location>
</feature>
<feature type="topological domain" description="Cytoplasmic" evidence="1">
    <location>
        <begin position="1"/>
        <end position="317"/>
    </location>
</feature>
<feature type="transmembrane region" description="Helical; Anchor for type IV membrane protein" evidence="1">
    <location>
        <begin position="318"/>
        <end position="338"/>
    </location>
</feature>
<feature type="topological domain" description="Vesicular" evidence="1">
    <location>
        <begin position="339"/>
        <end position="397"/>
    </location>
</feature>
<feature type="domain" description="t-SNARE coiled-coil homology" evidence="2">
    <location>
        <begin position="244"/>
        <end position="306"/>
    </location>
</feature>
<feature type="region of interest" description="Disordered" evidence="3">
    <location>
        <begin position="341"/>
        <end position="397"/>
    </location>
</feature>
<feature type="coiled-coil region" evidence="1">
    <location>
        <begin position="74"/>
        <end position="96"/>
    </location>
</feature>
<feature type="compositionally biased region" description="Basic and acidic residues" evidence="3">
    <location>
        <begin position="353"/>
        <end position="374"/>
    </location>
</feature>
<feature type="compositionally biased region" description="Acidic residues" evidence="3">
    <location>
        <begin position="386"/>
        <end position="397"/>
    </location>
</feature>
<feature type="modified residue" description="Phosphoserine" evidence="6">
    <location>
        <position position="109"/>
    </location>
</feature>
<feature type="sequence conflict" description="In Ref. 3; AAT93237." evidence="5" ref="3">
    <original>L</original>
    <variation>R</variation>
    <location>
        <position position="397"/>
    </location>
</feature>